<proteinExistence type="inferred from homology"/>
<comment type="function">
    <text evidence="1">Catalyzes the attachment of tryptophan to tRNA(Trp).</text>
</comment>
<comment type="catalytic activity">
    <reaction evidence="1">
        <text>tRNA(Trp) + L-tryptophan + ATP = L-tryptophyl-tRNA(Trp) + AMP + diphosphate + H(+)</text>
        <dbReference type="Rhea" id="RHEA:24080"/>
        <dbReference type="Rhea" id="RHEA-COMP:9671"/>
        <dbReference type="Rhea" id="RHEA-COMP:9705"/>
        <dbReference type="ChEBI" id="CHEBI:15378"/>
        <dbReference type="ChEBI" id="CHEBI:30616"/>
        <dbReference type="ChEBI" id="CHEBI:33019"/>
        <dbReference type="ChEBI" id="CHEBI:57912"/>
        <dbReference type="ChEBI" id="CHEBI:78442"/>
        <dbReference type="ChEBI" id="CHEBI:78535"/>
        <dbReference type="ChEBI" id="CHEBI:456215"/>
        <dbReference type="EC" id="6.1.1.2"/>
    </reaction>
</comment>
<comment type="subunit">
    <text evidence="1">Homodimer.</text>
</comment>
<comment type="subcellular location">
    <subcellularLocation>
        <location evidence="1">Cytoplasm</location>
    </subcellularLocation>
</comment>
<comment type="similarity">
    <text evidence="1">Belongs to the class-I aminoacyl-tRNA synthetase family.</text>
</comment>
<organism>
    <name type="scientific">Shewanella oneidensis (strain ATCC 700550 / JCM 31522 / CIP 106686 / LMG 19005 / NCIMB 14063 / MR-1)</name>
    <dbReference type="NCBI Taxonomy" id="211586"/>
    <lineage>
        <taxon>Bacteria</taxon>
        <taxon>Pseudomonadati</taxon>
        <taxon>Pseudomonadota</taxon>
        <taxon>Gammaproteobacteria</taxon>
        <taxon>Alteromonadales</taxon>
        <taxon>Shewanellaceae</taxon>
        <taxon>Shewanella</taxon>
    </lineage>
</organism>
<name>SYW_SHEON</name>
<reference key="1">
    <citation type="journal article" date="2002" name="Nat. Biotechnol.">
        <title>Genome sequence of the dissimilatory metal ion-reducing bacterium Shewanella oneidensis.</title>
        <authorList>
            <person name="Heidelberg J.F."/>
            <person name="Paulsen I.T."/>
            <person name="Nelson K.E."/>
            <person name="Gaidos E.J."/>
            <person name="Nelson W.C."/>
            <person name="Read T.D."/>
            <person name="Eisen J.A."/>
            <person name="Seshadri R."/>
            <person name="Ward N.L."/>
            <person name="Methe B.A."/>
            <person name="Clayton R.A."/>
            <person name="Meyer T."/>
            <person name="Tsapin A."/>
            <person name="Scott J."/>
            <person name="Beanan M.J."/>
            <person name="Brinkac L.M."/>
            <person name="Daugherty S.C."/>
            <person name="DeBoy R.T."/>
            <person name="Dodson R.J."/>
            <person name="Durkin A.S."/>
            <person name="Haft D.H."/>
            <person name="Kolonay J.F."/>
            <person name="Madupu R."/>
            <person name="Peterson J.D."/>
            <person name="Umayam L.A."/>
            <person name="White O."/>
            <person name="Wolf A.M."/>
            <person name="Vamathevan J.J."/>
            <person name="Weidman J.F."/>
            <person name="Impraim M."/>
            <person name="Lee K."/>
            <person name="Berry K.J."/>
            <person name="Lee C."/>
            <person name="Mueller J."/>
            <person name="Khouri H.M."/>
            <person name="Gill J."/>
            <person name="Utterback T.R."/>
            <person name="McDonald L.A."/>
            <person name="Feldblyum T.V."/>
            <person name="Smith H.O."/>
            <person name="Venter J.C."/>
            <person name="Nealson K.H."/>
            <person name="Fraser C.M."/>
        </authorList>
    </citation>
    <scope>NUCLEOTIDE SEQUENCE [LARGE SCALE GENOMIC DNA]</scope>
    <source>
        <strain>ATCC 700550 / JCM 31522 / CIP 106686 / LMG 19005 / NCIMB 14063 / MR-1</strain>
    </source>
</reference>
<feature type="chain" id="PRO_0000136673" description="Tryptophan--tRNA ligase">
    <location>
        <begin position="1"/>
        <end position="332"/>
    </location>
</feature>
<feature type="short sequence motif" description="'HIGH' region" evidence="1">
    <location>
        <begin position="12"/>
        <end position="20"/>
    </location>
</feature>
<feature type="short sequence motif" description="'KMSKS' region" evidence="1">
    <location>
        <begin position="195"/>
        <end position="199"/>
    </location>
</feature>
<feature type="binding site" evidence="1">
    <location>
        <begin position="11"/>
        <end position="13"/>
    </location>
    <ligand>
        <name>ATP</name>
        <dbReference type="ChEBI" id="CHEBI:30616"/>
    </ligand>
</feature>
<feature type="binding site" evidence="1">
    <location>
        <begin position="19"/>
        <end position="20"/>
    </location>
    <ligand>
        <name>ATP</name>
        <dbReference type="ChEBI" id="CHEBI:30616"/>
    </ligand>
</feature>
<feature type="binding site" evidence="1">
    <location>
        <position position="135"/>
    </location>
    <ligand>
        <name>L-tryptophan</name>
        <dbReference type="ChEBI" id="CHEBI:57912"/>
    </ligand>
</feature>
<feature type="binding site" evidence="1">
    <location>
        <begin position="147"/>
        <end position="149"/>
    </location>
    <ligand>
        <name>ATP</name>
        <dbReference type="ChEBI" id="CHEBI:30616"/>
    </ligand>
</feature>
<feature type="binding site" evidence="1">
    <location>
        <position position="186"/>
    </location>
    <ligand>
        <name>ATP</name>
        <dbReference type="ChEBI" id="CHEBI:30616"/>
    </ligand>
</feature>
<feature type="binding site" evidence="1">
    <location>
        <begin position="195"/>
        <end position="199"/>
    </location>
    <ligand>
        <name>ATP</name>
        <dbReference type="ChEBI" id="CHEBI:30616"/>
    </ligand>
</feature>
<keyword id="KW-0030">Aminoacyl-tRNA synthetase</keyword>
<keyword id="KW-0067">ATP-binding</keyword>
<keyword id="KW-0963">Cytoplasm</keyword>
<keyword id="KW-0436">Ligase</keyword>
<keyword id="KW-0547">Nucleotide-binding</keyword>
<keyword id="KW-0648">Protein biosynthesis</keyword>
<keyword id="KW-1185">Reference proteome</keyword>
<accession>Q8EK12</accession>
<dbReference type="EC" id="6.1.1.2" evidence="1"/>
<dbReference type="EMBL" id="AE014299">
    <property type="protein sequence ID" value="AAN53379.1"/>
    <property type="molecule type" value="Genomic_DNA"/>
</dbReference>
<dbReference type="RefSeq" id="NP_715934.1">
    <property type="nucleotide sequence ID" value="NC_004347.2"/>
</dbReference>
<dbReference type="RefSeq" id="WP_011070666.1">
    <property type="nucleotide sequence ID" value="NC_004347.2"/>
</dbReference>
<dbReference type="SMR" id="Q8EK12"/>
<dbReference type="STRING" id="211586.SO_0294"/>
<dbReference type="PaxDb" id="211586-SO_0294"/>
<dbReference type="KEGG" id="son:SO_0294"/>
<dbReference type="PATRIC" id="fig|211586.12.peg.286"/>
<dbReference type="eggNOG" id="COG0180">
    <property type="taxonomic scope" value="Bacteria"/>
</dbReference>
<dbReference type="HOGENOM" id="CLU_029244_1_1_6"/>
<dbReference type="OrthoDB" id="9801042at2"/>
<dbReference type="PhylomeDB" id="Q8EK12"/>
<dbReference type="BioCyc" id="SONE211586:G1GMP-284-MONOMER"/>
<dbReference type="Proteomes" id="UP000008186">
    <property type="component" value="Chromosome"/>
</dbReference>
<dbReference type="GO" id="GO:0005829">
    <property type="term" value="C:cytosol"/>
    <property type="evidence" value="ECO:0000318"/>
    <property type="project" value="GO_Central"/>
</dbReference>
<dbReference type="GO" id="GO:0005524">
    <property type="term" value="F:ATP binding"/>
    <property type="evidence" value="ECO:0007669"/>
    <property type="project" value="UniProtKB-UniRule"/>
</dbReference>
<dbReference type="GO" id="GO:0004830">
    <property type="term" value="F:tryptophan-tRNA ligase activity"/>
    <property type="evidence" value="ECO:0000318"/>
    <property type="project" value="GO_Central"/>
</dbReference>
<dbReference type="GO" id="GO:0006436">
    <property type="term" value="P:tryptophanyl-tRNA aminoacylation"/>
    <property type="evidence" value="ECO:0000318"/>
    <property type="project" value="GO_Central"/>
</dbReference>
<dbReference type="CDD" id="cd00806">
    <property type="entry name" value="TrpRS_core"/>
    <property type="match status" value="1"/>
</dbReference>
<dbReference type="FunFam" id="1.10.240.10:FF:000002">
    <property type="entry name" value="Tryptophan--tRNA ligase"/>
    <property type="match status" value="1"/>
</dbReference>
<dbReference type="FunFam" id="3.40.50.620:FF:000024">
    <property type="entry name" value="Tryptophan--tRNA ligase"/>
    <property type="match status" value="1"/>
</dbReference>
<dbReference type="Gene3D" id="3.40.50.620">
    <property type="entry name" value="HUPs"/>
    <property type="match status" value="1"/>
</dbReference>
<dbReference type="Gene3D" id="1.10.240.10">
    <property type="entry name" value="Tyrosyl-Transfer RNA Synthetase"/>
    <property type="match status" value="1"/>
</dbReference>
<dbReference type="HAMAP" id="MF_00140_B">
    <property type="entry name" value="Trp_tRNA_synth_B"/>
    <property type="match status" value="1"/>
</dbReference>
<dbReference type="InterPro" id="IPR001412">
    <property type="entry name" value="aa-tRNA-synth_I_CS"/>
</dbReference>
<dbReference type="InterPro" id="IPR002305">
    <property type="entry name" value="aa-tRNA-synth_Ic"/>
</dbReference>
<dbReference type="InterPro" id="IPR014729">
    <property type="entry name" value="Rossmann-like_a/b/a_fold"/>
</dbReference>
<dbReference type="InterPro" id="IPR002306">
    <property type="entry name" value="Trp-tRNA-ligase"/>
</dbReference>
<dbReference type="InterPro" id="IPR024109">
    <property type="entry name" value="Trp-tRNA-ligase_bac-type"/>
</dbReference>
<dbReference type="InterPro" id="IPR050203">
    <property type="entry name" value="Trp-tRNA_synthetase"/>
</dbReference>
<dbReference type="NCBIfam" id="TIGR00233">
    <property type="entry name" value="trpS"/>
    <property type="match status" value="1"/>
</dbReference>
<dbReference type="PANTHER" id="PTHR43766">
    <property type="entry name" value="TRYPTOPHAN--TRNA LIGASE, MITOCHONDRIAL"/>
    <property type="match status" value="1"/>
</dbReference>
<dbReference type="PANTHER" id="PTHR43766:SF1">
    <property type="entry name" value="TRYPTOPHAN--TRNA LIGASE, MITOCHONDRIAL"/>
    <property type="match status" value="1"/>
</dbReference>
<dbReference type="Pfam" id="PF00579">
    <property type="entry name" value="tRNA-synt_1b"/>
    <property type="match status" value="1"/>
</dbReference>
<dbReference type="PRINTS" id="PR01039">
    <property type="entry name" value="TRNASYNTHTRP"/>
</dbReference>
<dbReference type="SUPFAM" id="SSF52374">
    <property type="entry name" value="Nucleotidylyl transferase"/>
    <property type="match status" value="1"/>
</dbReference>
<dbReference type="PROSITE" id="PS00178">
    <property type="entry name" value="AA_TRNA_LIGASE_I"/>
    <property type="match status" value="1"/>
</dbReference>
<evidence type="ECO:0000255" key="1">
    <source>
        <dbReference type="HAMAP-Rule" id="MF_00140"/>
    </source>
</evidence>
<gene>
    <name evidence="1" type="primary">trpS</name>
    <name type="ordered locus">SO_0294</name>
</gene>
<protein>
    <recommendedName>
        <fullName evidence="1">Tryptophan--tRNA ligase</fullName>
        <ecNumber evidence="1">6.1.1.2</ecNumber>
    </recommendedName>
    <alternativeName>
        <fullName evidence="1">Tryptophanyl-tRNA synthetase</fullName>
        <shortName evidence="1">TrpRS</shortName>
    </alternativeName>
</protein>
<sequence length="332" mass="36769">MTKPIVLSGAQPSGELTIGNYMGALRQWVAMQDSHDCLYCVVDLHAITVRQDPQALREACLDTLALYLACGVDPKKSTVFIQSQVPQHTQLGWALNCYTQMGELSRMTQFKDKSQKHANNINVGLFGYPVLMAADILLYQANEIPVGQDQKQHLELTRDIATRFNNAYGETFTIPEPFIPEHGAKVMSLQDPLKKMSKSDDNRNNVIGLLEDPKAVMKKLKKAMTDSDEPPVVRFDIENKPGVSNLLSLMSGITGQSIASLEAEFEGKMYGHLKGAAGEAVVGMLEPLQERYRALRADRAYLDQVMRAGAENAQARAEVTLKKVYEKIGLLV</sequence>